<proteinExistence type="inferred from homology"/>
<reference key="1">
    <citation type="journal article" date="2007" name="Genome Res.">
        <title>Lateral gene transfer between obligate intracellular bacteria: evidence from the Rickettsia massiliae genome.</title>
        <authorList>
            <person name="Blanc G."/>
            <person name="Ogata H."/>
            <person name="Robert C."/>
            <person name="Audic S."/>
            <person name="Claverie J.-M."/>
            <person name="Raoult D."/>
        </authorList>
    </citation>
    <scope>NUCLEOTIDE SEQUENCE [LARGE SCALE GENOMIC DNA]</scope>
    <source>
        <strain>Mtu5</strain>
    </source>
</reference>
<sequence length="160" mass="18454">MSRRHAAEKRVILPDMKYNSIVLSRFINNIMKEGKKALAEKIVYSAFNKIEKKYRVDPYQTFNNAMHNVKPHLEVTSVRVGGANYQVPTHVDERRGYALASRWIINAASKRSEKMMIDKLAEELFEASNNRGVAIKKKEDTHKMAEANKAFSHFSPKKMK</sequence>
<keyword id="KW-0687">Ribonucleoprotein</keyword>
<keyword id="KW-0689">Ribosomal protein</keyword>
<keyword id="KW-0694">RNA-binding</keyword>
<keyword id="KW-0699">rRNA-binding</keyword>
<keyword id="KW-0820">tRNA-binding</keyword>
<comment type="function">
    <text evidence="1">One of the primary rRNA binding proteins, it binds directly to 16S rRNA where it nucleates assembly of the head domain of the 30S subunit. Is located at the subunit interface close to the decoding center, probably blocks exit of the E-site tRNA.</text>
</comment>
<comment type="subunit">
    <text evidence="1">Part of the 30S ribosomal subunit. Contacts proteins S9 and S11.</text>
</comment>
<comment type="similarity">
    <text evidence="1">Belongs to the universal ribosomal protein uS7 family.</text>
</comment>
<feature type="chain" id="PRO_1000060421" description="Small ribosomal subunit protein uS7">
    <location>
        <begin position="1"/>
        <end position="160"/>
    </location>
</feature>
<gene>
    <name evidence="1" type="primary">rpsG</name>
    <name type="ordered locus">RMA_0181</name>
</gene>
<accession>A8F0N9</accession>
<dbReference type="EMBL" id="CP000683">
    <property type="protein sequence ID" value="ABV84475.1"/>
    <property type="molecule type" value="Genomic_DNA"/>
</dbReference>
<dbReference type="RefSeq" id="WP_012152453.1">
    <property type="nucleotide sequence ID" value="NC_009900.1"/>
</dbReference>
<dbReference type="SMR" id="A8F0N9"/>
<dbReference type="KEGG" id="rms:RMA_0181"/>
<dbReference type="HOGENOM" id="CLU_072226_1_1_5"/>
<dbReference type="Proteomes" id="UP000001311">
    <property type="component" value="Chromosome"/>
</dbReference>
<dbReference type="GO" id="GO:0015935">
    <property type="term" value="C:small ribosomal subunit"/>
    <property type="evidence" value="ECO:0007669"/>
    <property type="project" value="InterPro"/>
</dbReference>
<dbReference type="GO" id="GO:0019843">
    <property type="term" value="F:rRNA binding"/>
    <property type="evidence" value="ECO:0007669"/>
    <property type="project" value="UniProtKB-UniRule"/>
</dbReference>
<dbReference type="GO" id="GO:0003735">
    <property type="term" value="F:structural constituent of ribosome"/>
    <property type="evidence" value="ECO:0007669"/>
    <property type="project" value="InterPro"/>
</dbReference>
<dbReference type="GO" id="GO:0000049">
    <property type="term" value="F:tRNA binding"/>
    <property type="evidence" value="ECO:0007669"/>
    <property type="project" value="UniProtKB-UniRule"/>
</dbReference>
<dbReference type="GO" id="GO:0006412">
    <property type="term" value="P:translation"/>
    <property type="evidence" value="ECO:0007669"/>
    <property type="project" value="UniProtKB-UniRule"/>
</dbReference>
<dbReference type="CDD" id="cd14869">
    <property type="entry name" value="uS7_Bacteria"/>
    <property type="match status" value="1"/>
</dbReference>
<dbReference type="FunFam" id="1.10.455.10:FF:000001">
    <property type="entry name" value="30S ribosomal protein S7"/>
    <property type="match status" value="1"/>
</dbReference>
<dbReference type="Gene3D" id="1.10.455.10">
    <property type="entry name" value="Ribosomal protein S7 domain"/>
    <property type="match status" value="1"/>
</dbReference>
<dbReference type="HAMAP" id="MF_00480_B">
    <property type="entry name" value="Ribosomal_uS7_B"/>
    <property type="match status" value="1"/>
</dbReference>
<dbReference type="InterPro" id="IPR000235">
    <property type="entry name" value="Ribosomal_uS7"/>
</dbReference>
<dbReference type="InterPro" id="IPR005717">
    <property type="entry name" value="Ribosomal_uS7_bac/org-type"/>
</dbReference>
<dbReference type="InterPro" id="IPR020606">
    <property type="entry name" value="Ribosomal_uS7_CS"/>
</dbReference>
<dbReference type="InterPro" id="IPR023798">
    <property type="entry name" value="Ribosomal_uS7_dom"/>
</dbReference>
<dbReference type="InterPro" id="IPR036823">
    <property type="entry name" value="Ribosomal_uS7_dom_sf"/>
</dbReference>
<dbReference type="NCBIfam" id="TIGR01029">
    <property type="entry name" value="rpsG_bact"/>
    <property type="match status" value="1"/>
</dbReference>
<dbReference type="PANTHER" id="PTHR11205">
    <property type="entry name" value="RIBOSOMAL PROTEIN S7"/>
    <property type="match status" value="1"/>
</dbReference>
<dbReference type="Pfam" id="PF00177">
    <property type="entry name" value="Ribosomal_S7"/>
    <property type="match status" value="1"/>
</dbReference>
<dbReference type="PIRSF" id="PIRSF002122">
    <property type="entry name" value="RPS7p_RPS7a_RPS5e_RPS7o"/>
    <property type="match status" value="1"/>
</dbReference>
<dbReference type="SUPFAM" id="SSF47973">
    <property type="entry name" value="Ribosomal protein S7"/>
    <property type="match status" value="1"/>
</dbReference>
<dbReference type="PROSITE" id="PS00052">
    <property type="entry name" value="RIBOSOMAL_S7"/>
    <property type="match status" value="1"/>
</dbReference>
<name>RS7_RICM5</name>
<evidence type="ECO:0000255" key="1">
    <source>
        <dbReference type="HAMAP-Rule" id="MF_00480"/>
    </source>
</evidence>
<evidence type="ECO:0000305" key="2"/>
<organism>
    <name type="scientific">Rickettsia massiliae (strain Mtu5)</name>
    <dbReference type="NCBI Taxonomy" id="416276"/>
    <lineage>
        <taxon>Bacteria</taxon>
        <taxon>Pseudomonadati</taxon>
        <taxon>Pseudomonadota</taxon>
        <taxon>Alphaproteobacteria</taxon>
        <taxon>Rickettsiales</taxon>
        <taxon>Rickettsiaceae</taxon>
        <taxon>Rickettsieae</taxon>
        <taxon>Rickettsia</taxon>
        <taxon>spotted fever group</taxon>
    </lineage>
</organism>
<protein>
    <recommendedName>
        <fullName evidence="1">Small ribosomal subunit protein uS7</fullName>
    </recommendedName>
    <alternativeName>
        <fullName evidence="2">30S ribosomal protein S7</fullName>
    </alternativeName>
</protein>